<accession>C0NF18</accession>
<sequence>MGPPLAQELTQACNQPLAATSNLQPDDGYKIELRAENTVDKYPAKQHARRVAAQIRQGKGLIFLMGQKSTLHEDSDQERSLRQRRYFFYLSGVDEADCDLTYDIKTDKLTLYVPDFDLRRAIWMGPTLERKAALQKFDVDEVNYHSSLDEDVKKWAKNQDPGSTIYLLHGSQGPAENPPNVIIDSKALKLAMDACRVIKDEHEIQLIRRANDISAAAHLEILRGITSMSNESHIEGSFLNTCVSLGAHNQAYQIIAASGSNAATLHYSKNNEPLKGRQFVCLDAGAEWNCYASDVTRTFPITHQWPSIEAKQIYQLVQEMQESCIALVKEGVRYLDLHFLAHNILIKGFLTLGIFKGGTLDEVKKSGASLLFFPHGLGHHIGLEVHDVSPQSIMAQGINDDSNNKLILPTCVSPCTTSSPALTSGMVITIEPGIYFSQLALDNAKPEQLKYIDMARVKNYMAVGGVRIEDDILVTKTGHENLTKVPKGDDMLEIIRQGKKGNDSHHV</sequence>
<dbReference type="EC" id="3.4.11.9"/>
<dbReference type="EMBL" id="GG663364">
    <property type="protein sequence ID" value="EEH09839.1"/>
    <property type="molecule type" value="Genomic_DNA"/>
</dbReference>
<dbReference type="RefSeq" id="XP_045290320.1">
    <property type="nucleotide sequence ID" value="XM_045428534.1"/>
</dbReference>
<dbReference type="SMR" id="C0NF18"/>
<dbReference type="STRING" id="447093.C0NF18"/>
<dbReference type="GeneID" id="69034501"/>
<dbReference type="VEuPathDB" id="FungiDB:I7I50_01201"/>
<dbReference type="HOGENOM" id="CLU_017266_1_2_1"/>
<dbReference type="InParanoid" id="C0NF18"/>
<dbReference type="Proteomes" id="UP000001631">
    <property type="component" value="Unassembled WGS sequence"/>
</dbReference>
<dbReference type="GO" id="GO:0030145">
    <property type="term" value="F:manganese ion binding"/>
    <property type="evidence" value="ECO:0007669"/>
    <property type="project" value="InterPro"/>
</dbReference>
<dbReference type="GO" id="GO:0070006">
    <property type="term" value="F:metalloaminopeptidase activity"/>
    <property type="evidence" value="ECO:0007669"/>
    <property type="project" value="InterPro"/>
</dbReference>
<dbReference type="GO" id="GO:0006508">
    <property type="term" value="P:proteolysis"/>
    <property type="evidence" value="ECO:0007669"/>
    <property type="project" value="UniProtKB-KW"/>
</dbReference>
<dbReference type="CDD" id="cd01087">
    <property type="entry name" value="Prolidase"/>
    <property type="match status" value="1"/>
</dbReference>
<dbReference type="Gene3D" id="3.90.230.10">
    <property type="entry name" value="Creatinase/methionine aminopeptidase superfamily"/>
    <property type="match status" value="1"/>
</dbReference>
<dbReference type="Gene3D" id="3.40.350.10">
    <property type="entry name" value="Creatinase/prolidase N-terminal domain"/>
    <property type="match status" value="1"/>
</dbReference>
<dbReference type="InterPro" id="IPR007865">
    <property type="entry name" value="Aminopep_P_N"/>
</dbReference>
<dbReference type="InterPro" id="IPR029149">
    <property type="entry name" value="Creatin/AminoP/Spt16_N"/>
</dbReference>
<dbReference type="InterPro" id="IPR036005">
    <property type="entry name" value="Creatinase/aminopeptidase-like"/>
</dbReference>
<dbReference type="InterPro" id="IPR000994">
    <property type="entry name" value="Pept_M24"/>
</dbReference>
<dbReference type="InterPro" id="IPR001131">
    <property type="entry name" value="Peptidase_M24B_aminopep-P_CS"/>
</dbReference>
<dbReference type="InterPro" id="IPR052433">
    <property type="entry name" value="X-Pro_dipept-like"/>
</dbReference>
<dbReference type="PANTHER" id="PTHR43226">
    <property type="entry name" value="XAA-PRO AMINOPEPTIDASE 3"/>
    <property type="match status" value="1"/>
</dbReference>
<dbReference type="PANTHER" id="PTHR43226:SF3">
    <property type="entry name" value="XAA-PRO AMINOPEPTIDASE AN0832-RELATED"/>
    <property type="match status" value="1"/>
</dbReference>
<dbReference type="Pfam" id="PF05195">
    <property type="entry name" value="AMP_N"/>
    <property type="match status" value="1"/>
</dbReference>
<dbReference type="Pfam" id="PF00557">
    <property type="entry name" value="Peptidase_M24"/>
    <property type="match status" value="1"/>
</dbReference>
<dbReference type="SMART" id="SM01011">
    <property type="entry name" value="AMP_N"/>
    <property type="match status" value="1"/>
</dbReference>
<dbReference type="SUPFAM" id="SSF55920">
    <property type="entry name" value="Creatinase/aminopeptidase"/>
    <property type="match status" value="1"/>
</dbReference>
<dbReference type="SUPFAM" id="SSF53092">
    <property type="entry name" value="Creatinase/prolidase N-terminal domain"/>
    <property type="match status" value="1"/>
</dbReference>
<dbReference type="PROSITE" id="PS00491">
    <property type="entry name" value="PROLINE_PEPTIDASE"/>
    <property type="match status" value="1"/>
</dbReference>
<evidence type="ECO:0000250" key="1"/>
<evidence type="ECO:0000305" key="2"/>
<keyword id="KW-0031">Aminopeptidase</keyword>
<keyword id="KW-0378">Hydrolase</keyword>
<keyword id="KW-0464">Manganese</keyword>
<keyword id="KW-0479">Metal-binding</keyword>
<keyword id="KW-0482">Metalloprotease</keyword>
<keyword id="KW-0645">Protease</keyword>
<keyword id="KW-1185">Reference proteome</keyword>
<protein>
    <recommendedName>
        <fullName>Probable Xaa-Pro aminopeptidase HCBG_01484</fullName>
        <ecNumber>3.4.11.9</ecNumber>
    </recommendedName>
    <alternativeName>
        <fullName>Aminoacylproline aminopeptidase</fullName>
    </alternativeName>
    <alternativeName>
        <fullName>Prolidase</fullName>
    </alternativeName>
</protein>
<proteinExistence type="inferred from homology"/>
<comment type="function">
    <text evidence="1">Catalyzes the removal of a penultimate prolyl residue from the N-termini of peptides.</text>
</comment>
<comment type="catalytic activity">
    <reaction>
        <text>Release of any N-terminal amino acid, including proline, that is linked to proline, even from a dipeptide or tripeptide.</text>
        <dbReference type="EC" id="3.4.11.9"/>
    </reaction>
</comment>
<comment type="cofactor">
    <cofactor evidence="1">
        <name>Mn(2+)</name>
        <dbReference type="ChEBI" id="CHEBI:29035"/>
    </cofactor>
    <text evidence="1">Binds 2 manganese ions per subunit.</text>
</comment>
<comment type="similarity">
    <text evidence="2">Belongs to the peptidase M24B family.</text>
</comment>
<name>AMPP2_AJECG</name>
<reference key="1">
    <citation type="submission" date="2009-02" db="EMBL/GenBank/DDBJ databases">
        <title>The genome sequence of Ajellomyces capsulatus strain G186AR.</title>
        <authorList>
            <person name="Champion M."/>
            <person name="Cuomo C.A."/>
            <person name="Ma L.-J."/>
            <person name="Henn M.R."/>
            <person name="Sil A."/>
            <person name="Goldman B."/>
            <person name="Young S.K."/>
            <person name="Kodira C.D."/>
            <person name="Zeng Q."/>
            <person name="Koehrsen M."/>
            <person name="Alvarado L."/>
            <person name="Berlin A."/>
            <person name="Borenstein D."/>
            <person name="Chen Z."/>
            <person name="Engels R."/>
            <person name="Freedman E."/>
            <person name="Gellesch M."/>
            <person name="Goldberg J."/>
            <person name="Griggs A."/>
            <person name="Gujja S."/>
            <person name="Heiman D."/>
            <person name="Hepburn T."/>
            <person name="Howarth C."/>
            <person name="Jen D."/>
            <person name="Larson L."/>
            <person name="Lewis B."/>
            <person name="Mehta T."/>
            <person name="Park D."/>
            <person name="Pearson M."/>
            <person name="Roberts A."/>
            <person name="Saif S."/>
            <person name="Shea T."/>
            <person name="Shenoy N."/>
            <person name="Sisk P."/>
            <person name="Stolte C."/>
            <person name="Sykes S."/>
            <person name="Walk T."/>
            <person name="White J."/>
            <person name="Yandava C."/>
            <person name="Klein B."/>
            <person name="McEwen J.G."/>
            <person name="Puccia R."/>
            <person name="Goldman G.H."/>
            <person name="Felipe M.S."/>
            <person name="Nino-Vega G."/>
            <person name="San-Blas G."/>
            <person name="Taylor J."/>
            <person name="Mendoza L."/>
            <person name="Galagan J.E."/>
            <person name="Nusbaum C."/>
            <person name="Birren B.W."/>
        </authorList>
    </citation>
    <scope>NUCLEOTIDE SEQUENCE [LARGE SCALE GENOMIC DNA]</scope>
    <source>
        <strain>G186AR / H82 / ATCC MYA-2454 / RMSCC 2432</strain>
    </source>
</reference>
<organism>
    <name type="scientific">Ajellomyces capsulatus (strain G186AR / H82 / ATCC MYA-2454 / RMSCC 2432)</name>
    <name type="common">Darling's disease fungus</name>
    <name type="synonym">Histoplasma capsulatum</name>
    <dbReference type="NCBI Taxonomy" id="447093"/>
    <lineage>
        <taxon>Eukaryota</taxon>
        <taxon>Fungi</taxon>
        <taxon>Dikarya</taxon>
        <taxon>Ascomycota</taxon>
        <taxon>Pezizomycotina</taxon>
        <taxon>Eurotiomycetes</taxon>
        <taxon>Eurotiomycetidae</taxon>
        <taxon>Onygenales</taxon>
        <taxon>Ajellomycetaceae</taxon>
        <taxon>Histoplasma</taxon>
    </lineage>
</organism>
<feature type="chain" id="PRO_0000411815" description="Probable Xaa-Pro aminopeptidase HCBG_01484">
    <location>
        <begin position="1"/>
        <end position="507"/>
    </location>
</feature>
<feature type="binding site" evidence="1">
    <location>
        <position position="283"/>
    </location>
    <ligand>
        <name>Mn(2+)</name>
        <dbReference type="ChEBI" id="CHEBI:29035"/>
        <label>2</label>
    </ligand>
</feature>
<feature type="binding site" evidence="1">
    <location>
        <position position="294"/>
    </location>
    <ligand>
        <name>Mn(2+)</name>
        <dbReference type="ChEBI" id="CHEBI:29035"/>
        <label>1</label>
    </ligand>
</feature>
<feature type="binding site" evidence="1">
    <location>
        <position position="294"/>
    </location>
    <ligand>
        <name>Mn(2+)</name>
        <dbReference type="ChEBI" id="CHEBI:29035"/>
        <label>2</label>
    </ligand>
</feature>
<feature type="binding site" evidence="1">
    <location>
        <position position="431"/>
    </location>
    <ligand>
        <name>Mn(2+)</name>
        <dbReference type="ChEBI" id="CHEBI:29035"/>
        <label>1</label>
    </ligand>
</feature>
<feature type="binding site" evidence="1">
    <location>
        <position position="469"/>
    </location>
    <ligand>
        <name>Mn(2+)</name>
        <dbReference type="ChEBI" id="CHEBI:29035"/>
        <label>1</label>
    </ligand>
</feature>
<feature type="binding site" evidence="1">
    <location>
        <position position="469"/>
    </location>
    <ligand>
        <name>Mn(2+)</name>
        <dbReference type="ChEBI" id="CHEBI:29035"/>
        <label>2</label>
    </ligand>
</feature>
<gene>
    <name type="ORF">HCBG_01484</name>
</gene>